<evidence type="ECO:0000255" key="1"/>
<evidence type="ECO:0000305" key="2"/>
<keyword id="KW-0067">ATP-binding</keyword>
<keyword id="KW-0184">Conjugation</keyword>
<keyword id="KW-0547">Nucleotide-binding</keyword>
<keyword id="KW-0614">Plasmid</keyword>
<keyword id="KW-1185">Reference proteome</keyword>
<protein>
    <recommendedName>
        <fullName>Probable conjugal transfer protein TraA</fullName>
    </recommendedName>
</protein>
<reference key="1">
    <citation type="journal article" date="1997" name="Nature">
        <title>Molecular basis of symbiosis between Rhizobium and legumes.</title>
        <authorList>
            <person name="Freiberg C.A."/>
            <person name="Fellay R."/>
            <person name="Bairoch A."/>
            <person name="Broughton W.J."/>
            <person name="Rosenthal A."/>
            <person name="Perret X."/>
        </authorList>
    </citation>
    <scope>NUCLEOTIDE SEQUENCE [LARGE SCALE GENOMIC DNA]</scope>
    <source>
        <strain>NBRC 101917 / NGR234</strain>
    </source>
</reference>
<reference key="2">
    <citation type="journal article" date="2009" name="Appl. Environ. Microbiol.">
        <title>Rhizobium sp. strain NGR234 possesses a remarkable number of secretion systems.</title>
        <authorList>
            <person name="Schmeisser C."/>
            <person name="Liesegang H."/>
            <person name="Krysciak D."/>
            <person name="Bakkou N."/>
            <person name="Le Quere A."/>
            <person name="Wollherr A."/>
            <person name="Heinemeyer I."/>
            <person name="Morgenstern B."/>
            <person name="Pommerening-Roeser A."/>
            <person name="Flores M."/>
            <person name="Palacios R."/>
            <person name="Brenner S."/>
            <person name="Gottschalk G."/>
            <person name="Schmitz R.A."/>
            <person name="Broughton W.J."/>
            <person name="Perret X."/>
            <person name="Strittmatter A.W."/>
            <person name="Streit W.R."/>
        </authorList>
    </citation>
    <scope>NUCLEOTIDE SEQUENCE [LARGE SCALE GENOMIC DNA]</scope>
    <source>
        <strain>NBRC 101917 / NGR234</strain>
    </source>
</reference>
<organism>
    <name type="scientific">Sinorhizobium fredii (strain NBRC 101917 / NGR234)</name>
    <dbReference type="NCBI Taxonomy" id="394"/>
    <lineage>
        <taxon>Bacteria</taxon>
        <taxon>Pseudomonadati</taxon>
        <taxon>Pseudomonadota</taxon>
        <taxon>Alphaproteobacteria</taxon>
        <taxon>Hyphomicrobiales</taxon>
        <taxon>Rhizobiaceae</taxon>
        <taxon>Sinorhizobium/Ensifer group</taxon>
        <taxon>Sinorhizobium</taxon>
    </lineage>
</organism>
<sequence>MAVPHFSVSVVARGSGRSAVLSAAYRHCARMDYEREARTIDYRAKQGLLHEEFVIPAESPEWLRSMIADRSVASASEAFWNKVEDFEKRSDAQLAKDVTIALPIELTTEQNIVLVRDFVERHVTAKGMVADWVYHDAPGNPHVHLMTTLRPLTADGFGAKKLAVVGPDGNSLRNDAGKIVYELWAGSLDDFNAFRDGWFACQNRHLALAGLDIRIDGRSFEKQGIELTPTIHLGVGTKAIERKATTDDQAVSLERLELQEEKRAENARRIQRRPEIVLDLITREKSVFDERDVAKILHRYIDDPGVFHSLMARILQSPKTLRLERERIAFATGIRAPAKYTTRELIRLEAEMGSRAIWLSRRSSHGVRKEVLEAAFSRHSRLSDEQKTAIEHVAGAERIAAVIGRAGAGKTTMMKAAREAWEAAGYRVVGGALAGKAAEGLEKEAGIASRTLSSWELRWNEGRKQLDDKTIFVLDEAGMVSSRQMALFVETATKAGAKLVLVGDPEQLQPIEAGAAFRAIADRIGYAELETIYRQREQWMCDASLDLARGNVGKVVDTYRANGRMMRSELKAEAVQNLIADWDRDYDPTKTTLILAHLRRDVRMLNQMARAKLVERGIVDAGFSFKAEDGNRRFAPGDQIVFLKNEGALGVKNGMRGKVVEAAQNRIVAEIGEVEHRRQVMVESRFYNNLDHGYATTIHKSQGATVDRVKVLASLSLDRHLTYVAMTRHREDLGVYYGARSFAKSGGLIQILSQKNSKETTLDYEKATFYRQALRFAEARGMHLVNVARTIARDRLEWTVRQKQKLADLTQRLVAIGARFGLAVGAKTTNSQNLKETRPMVAGIATFPKSMEQAVADRLEVDPGLKKQWEDVSTRFHLVYTQPEVAFKAVNVDAMLKDETVAKSALSNMANQPESYGSLKGKTGLLASRADKQDRERAERNVPALAQSLSDYMRQRSRAEQCYQADELAVRRKVAIEIPALSPGARQTLERVRDAIDRNDLPAALEFALADRQVKAELEGFARAVTERFGERAFLPLAAKDTNGETFKTITAGMNPGPKAEVQSAWNTMRTVQQLNAHERTIEALKQAETLRQTKSQGLSLK</sequence>
<proteinExistence type="inferred from homology"/>
<name>TRAA_SINFN</name>
<accession>P55418</accession>
<dbReference type="EMBL" id="U00090">
    <property type="protein sequence ID" value="AAB91648.1"/>
    <property type="molecule type" value="Genomic_DNA"/>
</dbReference>
<dbReference type="RefSeq" id="NP_443828.1">
    <property type="nucleotide sequence ID" value="NC_000914.2"/>
</dbReference>
<dbReference type="RefSeq" id="WP_010875410.1">
    <property type="nucleotide sequence ID" value="NC_000914.2"/>
</dbReference>
<dbReference type="SMR" id="P55418"/>
<dbReference type="KEGG" id="rhi:NGR_a03980"/>
<dbReference type="PATRIC" id="fig|394.7.peg.419"/>
<dbReference type="eggNOG" id="COG0507">
    <property type="taxonomic scope" value="Bacteria"/>
</dbReference>
<dbReference type="HOGENOM" id="CLU_006069_1_0_5"/>
<dbReference type="OrthoDB" id="1826980at2"/>
<dbReference type="Proteomes" id="UP000001054">
    <property type="component" value="Plasmid pNGR234a"/>
</dbReference>
<dbReference type="GO" id="GO:0005524">
    <property type="term" value="F:ATP binding"/>
    <property type="evidence" value="ECO:0007669"/>
    <property type="project" value="UniProtKB-KW"/>
</dbReference>
<dbReference type="GO" id="GO:0003678">
    <property type="term" value="F:DNA helicase activity"/>
    <property type="evidence" value="ECO:0007669"/>
    <property type="project" value="UniProtKB-ARBA"/>
</dbReference>
<dbReference type="CDD" id="cd17933">
    <property type="entry name" value="DEXSc_RecD-like"/>
    <property type="match status" value="1"/>
</dbReference>
<dbReference type="CDD" id="cd18809">
    <property type="entry name" value="SF1_C_RecD"/>
    <property type="match status" value="1"/>
</dbReference>
<dbReference type="Gene3D" id="2.30.30.940">
    <property type="match status" value="1"/>
</dbReference>
<dbReference type="Gene3D" id="3.30.930.30">
    <property type="match status" value="1"/>
</dbReference>
<dbReference type="Gene3D" id="3.40.50.300">
    <property type="entry name" value="P-loop containing nucleotide triphosphate hydrolases"/>
    <property type="match status" value="2"/>
</dbReference>
<dbReference type="InterPro" id="IPR027351">
    <property type="entry name" value="(+)RNA_virus_helicase_core_dom"/>
</dbReference>
<dbReference type="InterPro" id="IPR041533">
    <property type="entry name" value="Bep_BID"/>
</dbReference>
<dbReference type="InterPro" id="IPR050534">
    <property type="entry name" value="Coronavir_polyprotein_1ab"/>
</dbReference>
<dbReference type="InterPro" id="IPR005053">
    <property type="entry name" value="MobA_MobL"/>
</dbReference>
<dbReference type="InterPro" id="IPR027417">
    <property type="entry name" value="P-loop_NTPase"/>
</dbReference>
<dbReference type="InterPro" id="IPR014136">
    <property type="entry name" value="TraA_Ti"/>
</dbReference>
<dbReference type="NCBIfam" id="NF010402">
    <property type="entry name" value="PRK13826.1"/>
    <property type="match status" value="1"/>
</dbReference>
<dbReference type="NCBIfam" id="TIGR02768">
    <property type="entry name" value="TraA_Ti"/>
    <property type="match status" value="1"/>
</dbReference>
<dbReference type="PANTHER" id="PTHR43788:SF6">
    <property type="entry name" value="DNA HELICASE B"/>
    <property type="match status" value="1"/>
</dbReference>
<dbReference type="PANTHER" id="PTHR43788">
    <property type="entry name" value="DNA2/NAM7 HELICASE FAMILY MEMBER"/>
    <property type="match status" value="1"/>
</dbReference>
<dbReference type="Pfam" id="PF13604">
    <property type="entry name" value="AAA_30"/>
    <property type="match status" value="1"/>
</dbReference>
<dbReference type="Pfam" id="PF17841">
    <property type="entry name" value="Bep_C_terminal"/>
    <property type="match status" value="1"/>
</dbReference>
<dbReference type="Pfam" id="PF03389">
    <property type="entry name" value="MobA_MobL"/>
    <property type="match status" value="1"/>
</dbReference>
<dbReference type="Pfam" id="PF01443">
    <property type="entry name" value="Viral_helicase1"/>
    <property type="match status" value="1"/>
</dbReference>
<dbReference type="SUPFAM" id="SSF52540">
    <property type="entry name" value="P-loop containing nucleoside triphosphate hydrolases"/>
    <property type="match status" value="2"/>
</dbReference>
<gene>
    <name type="primary">traA</name>
    <name type="ordered locus">NGR_a03980</name>
    <name type="ORF">y4dS</name>
</gene>
<comment type="similarity">
    <text evidence="2">Belongs to the MobA/MobL family.</text>
</comment>
<geneLocation type="plasmid">
    <name>sym pNGR234a</name>
</geneLocation>
<feature type="chain" id="PRO_0000210855" description="Probable conjugal transfer protein TraA">
    <location>
        <begin position="1"/>
        <end position="1102"/>
    </location>
</feature>
<feature type="binding site" evidence="1">
    <location>
        <begin position="404"/>
        <end position="411"/>
    </location>
    <ligand>
        <name>ATP</name>
        <dbReference type="ChEBI" id="CHEBI:30616"/>
    </ligand>
</feature>